<proteinExistence type="inferred from homology"/>
<feature type="chain" id="PRO_1000072769" description="Probable glycine dehydrogenase (decarboxylating) subunit 1">
    <location>
        <begin position="1"/>
        <end position="447"/>
    </location>
</feature>
<name>GCSPA_METS5</name>
<gene>
    <name evidence="1" type="primary">gcvPA</name>
    <name type="ordered locus">Msed_1664</name>
</gene>
<keyword id="KW-0560">Oxidoreductase</keyword>
<keyword id="KW-1185">Reference proteome</keyword>
<sequence length="447" mass="50941">MDNHPWLPNISRIKDMLREIGVDDVEQLFQDVPRDLILRRELKVGYDSPLPEEDIRWRLNQVAERNLKLRYPPFLGAGAYPHSIPSVIRFILSRSEFYTAYTPYQPEVNQGLLQGLFEYQSLMAELLEMDVVNSSHYDWGGSLAEAVLMGYRINGKRKVVIPESINPLHEEVLRTWVSGRELEVVKIPVGKDGKIDLDFLSSLNSDEISSIYIQQPNFFGVVETELEYVTDWARKNNVVSIMGVSPLSLGLIKTPGELGFDIAVGDGQELGIPLNFGGPYSGILATRMDMKLVRQMPGRIVGMTQDSQGRRGFTLILQTREQFARREKATSNITTNEALIALANAVYLSLLGKEGIRELATEIYKRSHYALKRMEDEELGKRKWESDFFEEFTFVFRSDYDRIHSELLRRGIHGGLRLGPREALFCVTEVHTKRAIDDLVNAMKEVA</sequence>
<dbReference type="EC" id="1.4.4.2" evidence="1"/>
<dbReference type="EMBL" id="CP000682">
    <property type="protein sequence ID" value="ABP95819.1"/>
    <property type="molecule type" value="Genomic_DNA"/>
</dbReference>
<dbReference type="RefSeq" id="WP_012021606.1">
    <property type="nucleotide sequence ID" value="NC_009440.1"/>
</dbReference>
<dbReference type="SMR" id="A4YHB7"/>
<dbReference type="STRING" id="399549.Msed_1664"/>
<dbReference type="GeneID" id="91756176"/>
<dbReference type="KEGG" id="mse:Msed_1664"/>
<dbReference type="eggNOG" id="arCOG00077">
    <property type="taxonomic scope" value="Archaea"/>
</dbReference>
<dbReference type="HOGENOM" id="CLU_004620_0_2_2"/>
<dbReference type="Proteomes" id="UP000000242">
    <property type="component" value="Chromosome"/>
</dbReference>
<dbReference type="GO" id="GO:0004375">
    <property type="term" value="F:glycine dehydrogenase (decarboxylating) activity"/>
    <property type="evidence" value="ECO:0007669"/>
    <property type="project" value="UniProtKB-EC"/>
</dbReference>
<dbReference type="GO" id="GO:0019464">
    <property type="term" value="P:glycine decarboxylation via glycine cleavage system"/>
    <property type="evidence" value="ECO:0007669"/>
    <property type="project" value="UniProtKB-UniRule"/>
</dbReference>
<dbReference type="GO" id="GO:0009116">
    <property type="term" value="P:nucleoside metabolic process"/>
    <property type="evidence" value="ECO:0007669"/>
    <property type="project" value="InterPro"/>
</dbReference>
<dbReference type="CDD" id="cd00613">
    <property type="entry name" value="GDC-P"/>
    <property type="match status" value="1"/>
</dbReference>
<dbReference type="Gene3D" id="3.90.1150.10">
    <property type="entry name" value="Aspartate Aminotransferase, domain 1"/>
    <property type="match status" value="1"/>
</dbReference>
<dbReference type="Gene3D" id="3.40.640.10">
    <property type="entry name" value="Type I PLP-dependent aspartate aminotransferase-like (Major domain)"/>
    <property type="match status" value="1"/>
</dbReference>
<dbReference type="HAMAP" id="MF_00712">
    <property type="entry name" value="GcvPA"/>
    <property type="match status" value="1"/>
</dbReference>
<dbReference type="InterPro" id="IPR023010">
    <property type="entry name" value="GcvPA"/>
</dbReference>
<dbReference type="InterPro" id="IPR049315">
    <property type="entry name" value="GDC-P_N"/>
</dbReference>
<dbReference type="InterPro" id="IPR020581">
    <property type="entry name" value="GDC_P"/>
</dbReference>
<dbReference type="InterPro" id="IPR015424">
    <property type="entry name" value="PyrdxlP-dep_Trfase"/>
</dbReference>
<dbReference type="InterPro" id="IPR015421">
    <property type="entry name" value="PyrdxlP-dep_Trfase_major"/>
</dbReference>
<dbReference type="InterPro" id="IPR015422">
    <property type="entry name" value="PyrdxlP-dep_Trfase_small"/>
</dbReference>
<dbReference type="NCBIfam" id="NF001696">
    <property type="entry name" value="PRK00451.1"/>
    <property type="match status" value="1"/>
</dbReference>
<dbReference type="PANTHER" id="PTHR42806">
    <property type="entry name" value="GLYCINE CLEAVAGE SYSTEM P-PROTEIN"/>
    <property type="match status" value="1"/>
</dbReference>
<dbReference type="PANTHER" id="PTHR42806:SF1">
    <property type="entry name" value="GLYCINE DEHYDROGENASE (DECARBOXYLATING)"/>
    <property type="match status" value="1"/>
</dbReference>
<dbReference type="Pfam" id="PF02347">
    <property type="entry name" value="GDC-P"/>
    <property type="match status" value="1"/>
</dbReference>
<dbReference type="PIRSF" id="PIRSF006815">
    <property type="entry name" value="GcvPA"/>
    <property type="match status" value="1"/>
</dbReference>
<dbReference type="SUPFAM" id="SSF53383">
    <property type="entry name" value="PLP-dependent transferases"/>
    <property type="match status" value="1"/>
</dbReference>
<reference key="1">
    <citation type="journal article" date="2008" name="Appl. Environ. Microbiol.">
        <title>The genome sequence of the metal-mobilizing, extremely thermoacidophilic archaeon Metallosphaera sedula provides insights into bioleaching-associated metabolism.</title>
        <authorList>
            <person name="Auernik K.S."/>
            <person name="Maezato Y."/>
            <person name="Blum P.H."/>
            <person name="Kelly R.M."/>
        </authorList>
    </citation>
    <scope>NUCLEOTIDE SEQUENCE [LARGE SCALE GENOMIC DNA]</scope>
    <source>
        <strain>ATCC 51363 / DSM 5348 / JCM 9185 / NBRC 15509 / TH2</strain>
    </source>
</reference>
<accession>A4YHB7</accession>
<evidence type="ECO:0000255" key="1">
    <source>
        <dbReference type="HAMAP-Rule" id="MF_00712"/>
    </source>
</evidence>
<comment type="function">
    <text evidence="1">The glycine cleavage system catalyzes the degradation of glycine. The P protein binds the alpha-amino group of glycine through its pyridoxal phosphate cofactor; CO(2) is released and the remaining methylamine moiety is then transferred to the lipoamide cofactor of the H protein.</text>
</comment>
<comment type="catalytic activity">
    <reaction evidence="1">
        <text>N(6)-[(R)-lipoyl]-L-lysyl-[glycine-cleavage complex H protein] + glycine + H(+) = N(6)-[(R)-S(8)-aminomethyldihydrolipoyl]-L-lysyl-[glycine-cleavage complex H protein] + CO2</text>
        <dbReference type="Rhea" id="RHEA:24304"/>
        <dbReference type="Rhea" id="RHEA-COMP:10494"/>
        <dbReference type="Rhea" id="RHEA-COMP:10495"/>
        <dbReference type="ChEBI" id="CHEBI:15378"/>
        <dbReference type="ChEBI" id="CHEBI:16526"/>
        <dbReference type="ChEBI" id="CHEBI:57305"/>
        <dbReference type="ChEBI" id="CHEBI:83099"/>
        <dbReference type="ChEBI" id="CHEBI:83143"/>
        <dbReference type="EC" id="1.4.4.2"/>
    </reaction>
</comment>
<comment type="subunit">
    <text evidence="1">The glycine cleavage system is composed of four proteins: P, T, L and H. In this organism, the P 'protein' is a heterodimer of two subunits.</text>
</comment>
<comment type="similarity">
    <text evidence="1">Belongs to the GcvP family. N-terminal subunit subfamily.</text>
</comment>
<protein>
    <recommendedName>
        <fullName evidence="1">Probable glycine dehydrogenase (decarboxylating) subunit 1</fullName>
        <ecNumber evidence="1">1.4.4.2</ecNumber>
    </recommendedName>
    <alternativeName>
        <fullName evidence="1">Glycine cleavage system P-protein subunit 1</fullName>
    </alternativeName>
    <alternativeName>
        <fullName evidence="1">Glycine decarboxylase subunit 1</fullName>
    </alternativeName>
    <alternativeName>
        <fullName evidence="1">Glycine dehydrogenase (aminomethyl-transferring) subunit 1</fullName>
    </alternativeName>
</protein>
<organism>
    <name type="scientific">Metallosphaera sedula (strain ATCC 51363 / DSM 5348 / JCM 9185 / NBRC 15509 / TH2)</name>
    <dbReference type="NCBI Taxonomy" id="399549"/>
    <lineage>
        <taxon>Archaea</taxon>
        <taxon>Thermoproteota</taxon>
        <taxon>Thermoprotei</taxon>
        <taxon>Sulfolobales</taxon>
        <taxon>Sulfolobaceae</taxon>
        <taxon>Metallosphaera</taxon>
    </lineage>
</organism>